<name>GP13_BPPZA</name>
<organismHost>
    <name type="scientific">Bacillus subtilis</name>
    <dbReference type="NCBI Taxonomy" id="1423"/>
</organismHost>
<protein>
    <recommendedName>
        <fullName evidence="1">Morphogenesis protein 1</fullName>
    </recommendedName>
    <alternativeName>
        <fullName evidence="1">Gene product 13</fullName>
        <shortName evidence="1">gp13</shortName>
    </alternativeName>
    <alternativeName>
        <fullName evidence="1">Protein p13</fullName>
    </alternativeName>
    <domain>
        <recommendedName>
            <fullName>Lysozyme-like glycosidase</fullName>
            <ecNumber>3.2.1.-</ecNumber>
        </recommendedName>
    </domain>
    <domain>
        <recommendedName>
            <fullName>Probable metalloendopeptidase</fullName>
            <ecNumber>3.4.-.-</ecNumber>
        </recommendedName>
    </domain>
</protein>
<dbReference type="EC" id="3.2.1.-"/>
<dbReference type="EC" id="3.4.-.-"/>
<dbReference type="EMBL" id="M11813">
    <property type="protein sequence ID" value="AAA88490.1"/>
    <property type="molecule type" value="Genomic_DNA"/>
</dbReference>
<dbReference type="PIR" id="H24831">
    <property type="entry name" value="WMBP13"/>
</dbReference>
<dbReference type="SMR" id="P07538"/>
<dbReference type="Proteomes" id="UP000000855">
    <property type="component" value="Segment"/>
</dbReference>
<dbReference type="GO" id="GO:0044423">
    <property type="term" value="C:virion component"/>
    <property type="evidence" value="ECO:0007669"/>
    <property type="project" value="UniProtKB-KW"/>
</dbReference>
<dbReference type="GO" id="GO:0016798">
    <property type="term" value="F:hydrolase activity, acting on glycosyl bonds"/>
    <property type="evidence" value="ECO:0007669"/>
    <property type="project" value="UniProtKB-KW"/>
</dbReference>
<dbReference type="GO" id="GO:0046872">
    <property type="term" value="F:metal ion binding"/>
    <property type="evidence" value="ECO:0007669"/>
    <property type="project" value="UniProtKB-KW"/>
</dbReference>
<dbReference type="GO" id="GO:0008237">
    <property type="term" value="F:metallopeptidase activity"/>
    <property type="evidence" value="ECO:0007669"/>
    <property type="project" value="UniProtKB-KW"/>
</dbReference>
<dbReference type="GO" id="GO:0071555">
    <property type="term" value="P:cell wall organization"/>
    <property type="evidence" value="ECO:0007669"/>
    <property type="project" value="UniProtKB-KW"/>
</dbReference>
<dbReference type="GO" id="GO:0042742">
    <property type="term" value="P:defense response to bacterium"/>
    <property type="evidence" value="ECO:0007669"/>
    <property type="project" value="UniProtKB-KW"/>
</dbReference>
<dbReference type="GO" id="GO:0031640">
    <property type="term" value="P:killing of cells of another organism"/>
    <property type="evidence" value="ECO:0007669"/>
    <property type="project" value="UniProtKB-KW"/>
</dbReference>
<dbReference type="GO" id="GO:0006508">
    <property type="term" value="P:proteolysis"/>
    <property type="evidence" value="ECO:0007669"/>
    <property type="project" value="UniProtKB-KW"/>
</dbReference>
<dbReference type="GO" id="GO:0098994">
    <property type="term" value="P:symbiont entry into host cell via disruption of host cell envelope"/>
    <property type="evidence" value="ECO:0007669"/>
    <property type="project" value="UniProtKB-KW"/>
</dbReference>
<dbReference type="GO" id="GO:0098932">
    <property type="term" value="P:symbiont entry into host cell via disruption of host cell wall peptidoglycan"/>
    <property type="evidence" value="ECO:0007669"/>
    <property type="project" value="UniProtKB-KW"/>
</dbReference>
<dbReference type="GO" id="GO:0098003">
    <property type="term" value="P:viral tail assembly"/>
    <property type="evidence" value="ECO:0007669"/>
    <property type="project" value="UniProtKB-KW"/>
</dbReference>
<dbReference type="CDD" id="cd12797">
    <property type="entry name" value="M23_peptidase"/>
    <property type="match status" value="1"/>
</dbReference>
<dbReference type="Gene3D" id="1.10.530.10">
    <property type="match status" value="1"/>
</dbReference>
<dbReference type="Gene3D" id="2.70.70.10">
    <property type="entry name" value="Glucose Permease (Domain IIA)"/>
    <property type="match status" value="1"/>
</dbReference>
<dbReference type="InterPro" id="IPR011055">
    <property type="entry name" value="Dup_hybrid_motif"/>
</dbReference>
<dbReference type="InterPro" id="IPR041219">
    <property type="entry name" value="Phage_lysozyme2"/>
</dbReference>
<dbReference type="Pfam" id="PF18013">
    <property type="entry name" value="Phage_lysozyme2"/>
    <property type="match status" value="1"/>
</dbReference>
<dbReference type="SUPFAM" id="SSF51261">
    <property type="entry name" value="Duplicated hybrid motif"/>
    <property type="match status" value="1"/>
</dbReference>
<keyword id="KW-0929">Antimicrobial</keyword>
<keyword id="KW-0081">Bacteriolytic enzyme</keyword>
<keyword id="KW-0961">Cell wall biogenesis/degradation</keyword>
<keyword id="KW-1235">Degradation of host cell envelope components during virus entry</keyword>
<keyword id="KW-1236">Degradation of host peptidoglycans during virus entry</keyword>
<keyword id="KW-0326">Glycosidase</keyword>
<keyword id="KW-0378">Hydrolase</keyword>
<keyword id="KW-0426">Late protein</keyword>
<keyword id="KW-0479">Metal-binding</keyword>
<keyword id="KW-0482">Metalloprotease</keyword>
<keyword id="KW-0511">Multifunctional enzyme</keyword>
<keyword id="KW-0645">Protease</keyword>
<keyword id="KW-1188">Viral release from host cell</keyword>
<keyword id="KW-1245">Viral tail assembly</keyword>
<keyword id="KW-0946">Virion</keyword>
<keyword id="KW-1160">Virus entry into host cell</keyword>
<keyword id="KW-0862">Zinc</keyword>
<comment type="function">
    <text evidence="1">May serve as a plug to restrain the highly pressurized packaged genome and thus would be the first virion protein to contact the host cell wall, degrading the peptidoglycan layer and thereby facilitating viral genome entry into the host bacteria. Acts probably as a multifunctional enzyme that degrades N-acetylglucosamine polymers (in vitro) and cleaves the peptide cross-links of the host cell wall. Essential for the tail assembly.</text>
</comment>
<comment type="cofactor">
    <cofactor evidence="1">
        <name>Zn(2+)</name>
        <dbReference type="ChEBI" id="CHEBI:29105"/>
    </cofactor>
    <text evidence="1">Binds 1 zinc ion per subunit.</text>
</comment>
<comment type="subcellular location">
    <subcellularLocation>
        <location evidence="1">Virion</location>
    </subcellularLocation>
    <text evidence="1">Located at the distal tip of the tail knob.</text>
</comment>
<comment type="similarity">
    <text evidence="2">In the N-terminal section; belongs to the glycosyl hydrolase 24 family.</text>
</comment>
<comment type="similarity">
    <text evidence="2">In the C-terminal section; belongs to the peptidase M23B family.</text>
</comment>
<gene>
    <name type="primary">13</name>
</gene>
<evidence type="ECO:0000250" key="1">
    <source>
        <dbReference type="UniProtKB" id="P15132"/>
    </source>
</evidence>
<evidence type="ECO:0000305" key="2"/>
<organism>
    <name type="scientific">Bacillus phage PZA</name>
    <name type="common">Bacteriophage PZA</name>
    <dbReference type="NCBI Taxonomy" id="10757"/>
    <lineage>
        <taxon>Viruses</taxon>
        <taxon>Duplodnaviria</taxon>
        <taxon>Heunggongvirae</taxon>
        <taxon>Uroviricota</taxon>
        <taxon>Caudoviricetes</taxon>
        <taxon>Salasmaviridae</taxon>
        <taxon>Picovirinae</taxon>
        <taxon>Salasvirus</taxon>
        <taxon>Salasvirus PZA</taxon>
    </lineage>
</organism>
<reference key="1">
    <citation type="journal article" date="1986" name="Gene">
        <title>Nucleotide sequence of the late region of Bacillus subtilis phage PZA, a close relative of phi 29.</title>
        <authorList>
            <person name="Paces V."/>
            <person name="Vlcek C."/>
            <person name="Urbanek P."/>
        </authorList>
    </citation>
    <scope>NUCLEOTIDE SEQUENCE [GENOMIC DNA]</scope>
</reference>
<feature type="chain" id="PRO_0000106596" description="Morphogenesis protein 1">
    <location>
        <begin position="1"/>
        <end position="365"/>
    </location>
</feature>
<feature type="region of interest" description="Lysozyme-like glycosidase" evidence="1">
    <location>
        <begin position="1"/>
        <end position="159"/>
    </location>
</feature>
<feature type="region of interest" description="Linker" evidence="1">
    <location>
        <begin position="160"/>
        <end position="165"/>
    </location>
</feature>
<feature type="region of interest" description="Probable metalloendopeptidase" evidence="1">
    <location>
        <begin position="166"/>
        <end position="365"/>
    </location>
</feature>
<feature type="active site" description="For lysozyme-like glycosidase activity" evidence="1">
    <location>
        <position position="45"/>
    </location>
</feature>
<feature type="binding site" evidence="1">
    <location>
        <position position="45"/>
    </location>
    <ligand>
        <name>substrate</name>
    </ligand>
</feature>
<feature type="binding site" evidence="1">
    <location>
        <position position="71"/>
    </location>
    <ligand>
        <name>substrate</name>
    </ligand>
</feature>
<feature type="binding site" evidence="1">
    <location>
        <position position="106"/>
    </location>
    <ligand>
        <name>substrate</name>
    </ligand>
</feature>
<feature type="binding site" evidence="1">
    <location>
        <begin position="137"/>
        <end position="140"/>
    </location>
    <ligand>
        <name>substrate</name>
    </ligand>
</feature>
<feature type="binding site" evidence="1">
    <location>
        <position position="188"/>
    </location>
    <ligand>
        <name>Zn(2+)</name>
        <dbReference type="ChEBI" id="CHEBI:29105"/>
    </ligand>
</feature>
<feature type="binding site" evidence="1">
    <location>
        <position position="195"/>
    </location>
    <ligand>
        <name>Zn(2+)</name>
        <dbReference type="ChEBI" id="CHEBI:29105"/>
    </ligand>
</feature>
<feature type="binding site" evidence="1">
    <location>
        <position position="280"/>
    </location>
    <ligand>
        <name>Zn(2+)</name>
        <dbReference type="ChEBI" id="CHEBI:29105"/>
    </ligand>
</feature>
<accession>P07538</accession>
<sequence>MVYVSNKYLTMSEMKVNAQYILNYLSNNGWTKQAICGMLGNMQSESTINPGLWQNLDEGNTSLGFGLVQWTPASNYINWANNQGIPYKNMDSELKRIIWEVNNNAQWNNLRDMTFKEYIKSTKTPRELAMIFLASYERPANPNQPVRGDQAEYWYKNLSGGGGGGLQLAQFPMDIINITQGENGSFSHKGTLCIDFVGKTEKYPYYAPCDCTCVWRGDASAYLAWTSDKEVMCADGSVRYITWVNVHESPLPFDVGKKLKKGDLMGHTGIGGNVTGDHWHFNVIDGKEYQGWTKKPDSCLAGTELHIYDVFAVNNVEIINGNGYDWKTSDWQDGDGGDGGDDNENNKTKDLITLLLSDALHGWKA</sequence>
<proteinExistence type="inferred from homology"/>